<protein>
    <recommendedName>
        <fullName evidence="6">Ornithine carbamoyltransferase, anabolic</fullName>
        <shortName evidence="6">OTCase</shortName>
        <ecNumber evidence="1">2.1.3.3</ecNumber>
    </recommendedName>
</protein>
<proteinExistence type="evidence at protein level"/>
<feature type="initiator methionine" description="Removed" evidence="4">
    <location>
        <position position="1"/>
    </location>
</feature>
<feature type="chain" id="PRO_0000113073" description="Ornithine carbamoyltransferase, anabolic">
    <location>
        <begin position="2"/>
        <end position="315"/>
    </location>
</feature>
<feature type="binding site" evidence="1">
    <location>
        <begin position="57"/>
        <end position="60"/>
    </location>
    <ligand>
        <name>carbamoyl phosphate</name>
        <dbReference type="ChEBI" id="CHEBI:58228"/>
    </ligand>
</feature>
<feature type="binding site" evidence="8">
    <location>
        <position position="84"/>
    </location>
    <ligand>
        <name>carbamoyl phosphate</name>
        <dbReference type="ChEBI" id="CHEBI:58228"/>
    </ligand>
</feature>
<feature type="binding site" evidence="1">
    <location>
        <position position="108"/>
    </location>
    <ligand>
        <name>carbamoyl phosphate</name>
        <dbReference type="ChEBI" id="CHEBI:58228"/>
    </ligand>
</feature>
<feature type="binding site" evidence="1">
    <location>
        <begin position="135"/>
        <end position="138"/>
    </location>
    <ligand>
        <name>carbamoyl phosphate</name>
        <dbReference type="ChEBI" id="CHEBI:58228"/>
    </ligand>
</feature>
<feature type="binding site" evidence="1">
    <location>
        <position position="166"/>
    </location>
    <ligand>
        <name>L-ornithine</name>
        <dbReference type="ChEBI" id="CHEBI:46911"/>
    </ligand>
</feature>
<feature type="binding site" evidence="1">
    <location>
        <position position="230"/>
    </location>
    <ligand>
        <name>L-ornithine</name>
        <dbReference type="ChEBI" id="CHEBI:46911"/>
    </ligand>
</feature>
<feature type="binding site" evidence="1">
    <location>
        <begin position="234"/>
        <end position="235"/>
    </location>
    <ligand>
        <name>L-ornithine</name>
        <dbReference type="ChEBI" id="CHEBI:46911"/>
    </ligand>
</feature>
<feature type="binding site" evidence="1">
    <location>
        <begin position="270"/>
        <end position="271"/>
    </location>
    <ligand>
        <name>carbamoyl phosphate</name>
        <dbReference type="ChEBI" id="CHEBI:58228"/>
    </ligand>
</feature>
<feature type="binding site" evidence="1">
    <location>
        <position position="298"/>
    </location>
    <ligand>
        <name>carbamoyl phosphate</name>
        <dbReference type="ChEBI" id="CHEBI:58228"/>
    </ligand>
</feature>
<feature type="mutagenesis site" description="Decreased heat stability." evidence="3">
    <original>W</original>
    <variation>A</variation>
    <location>
        <position position="22"/>
    </location>
</feature>
<feature type="mutagenesis site" description="Increased dissociation of dodecamers into trimers." evidence="3">
    <original>E</original>
    <variation>Q</variation>
    <location>
        <position position="26"/>
    </location>
</feature>
<feature type="mutagenesis site" description="Increased dissociation of dodecamers into trimers." evidence="3">
    <original>M</original>
    <variation>A</variation>
    <location>
        <position position="30"/>
    </location>
</feature>
<feature type="mutagenesis site" description="Increased dissociation of dodecamers into trimers." evidence="3">
    <original>W</original>
    <variation>A</variation>
    <location>
        <position position="34"/>
    </location>
</feature>
<feature type="mutagenesis site" description="Becomes active at low temperatures; when associated with G-278." evidence="2">
    <original>Y</original>
    <variation>C</variation>
    <location>
        <position position="228"/>
    </location>
</feature>
<feature type="mutagenesis site" description="Becomes active at low temperatures; when associated with G-278." evidence="2">
    <original>A</original>
    <variation>D</variation>
    <location>
        <position position="241"/>
    </location>
</feature>
<feature type="mutagenesis site" description="Becomes active at low temperatures; when associated with C-228 or D-241." evidence="2">
    <original>E</original>
    <variation>G</variation>
    <location>
        <position position="278"/>
    </location>
</feature>
<feature type="sequence conflict" description="In Ref. 1; CAA73260." evidence="7" ref="1">
    <original>E</original>
    <variation>ER</variation>
    <location>
        <position position="206"/>
    </location>
</feature>
<feature type="sequence conflict" description="In Ref. 1; CAA67609." evidence="7" ref="1">
    <location>
        <position position="209"/>
    </location>
</feature>
<feature type="helix" evidence="10">
    <location>
        <begin position="13"/>
        <end position="15"/>
    </location>
</feature>
<feature type="helix" evidence="10">
    <location>
        <begin position="18"/>
        <end position="37"/>
    </location>
</feature>
<feature type="turn" evidence="10">
    <location>
        <begin position="43"/>
        <end position="46"/>
    </location>
</feature>
<feature type="strand" evidence="10">
    <location>
        <begin position="48"/>
        <end position="55"/>
    </location>
</feature>
<feature type="helix" evidence="10">
    <location>
        <begin position="59"/>
        <end position="70"/>
    </location>
</feature>
<feature type="strand" evidence="10">
    <location>
        <begin position="73"/>
        <end position="79"/>
    </location>
</feature>
<feature type="helix" evidence="10">
    <location>
        <begin position="80"/>
        <end position="82"/>
    </location>
</feature>
<feature type="turn" evidence="10">
    <location>
        <begin position="84"/>
        <end position="88"/>
    </location>
</feature>
<feature type="helix" evidence="10">
    <location>
        <begin position="91"/>
        <end position="98"/>
    </location>
</feature>
<feature type="turn" evidence="10">
    <location>
        <begin position="99"/>
        <end position="101"/>
    </location>
</feature>
<feature type="strand" evidence="10">
    <location>
        <begin position="103"/>
        <end position="108"/>
    </location>
</feature>
<feature type="helix" evidence="10">
    <location>
        <begin position="112"/>
        <end position="121"/>
    </location>
</feature>
<feature type="strand" evidence="10">
    <location>
        <begin position="126"/>
        <end position="130"/>
    </location>
</feature>
<feature type="helix" evidence="10">
    <location>
        <begin position="136"/>
        <end position="150"/>
    </location>
</feature>
<feature type="strand" evidence="10">
    <location>
        <begin position="157"/>
        <end position="162"/>
    </location>
</feature>
<feature type="helix" evidence="10">
    <location>
        <begin position="166"/>
        <end position="177"/>
    </location>
</feature>
<feature type="strand" evidence="10">
    <location>
        <begin position="181"/>
        <end position="185"/>
    </location>
</feature>
<feature type="helix" evidence="10">
    <location>
        <begin position="194"/>
        <end position="207"/>
    </location>
</feature>
<feature type="strand" evidence="10">
    <location>
        <begin position="210"/>
        <end position="215"/>
    </location>
</feature>
<feature type="helix" evidence="10">
    <location>
        <begin position="217"/>
        <end position="220"/>
    </location>
</feature>
<feature type="turn" evidence="10">
    <location>
        <begin position="221"/>
        <end position="223"/>
    </location>
</feature>
<feature type="strand" evidence="10">
    <location>
        <begin position="225"/>
        <end position="229"/>
    </location>
</feature>
<feature type="strand" evidence="10">
    <location>
        <begin position="239"/>
        <end position="242"/>
    </location>
</feature>
<feature type="helix" evidence="10">
    <location>
        <begin position="243"/>
        <end position="248"/>
    </location>
</feature>
<feature type="helix" evidence="10">
    <location>
        <begin position="249"/>
        <end position="251"/>
    </location>
</feature>
<feature type="helix" evidence="10">
    <location>
        <begin position="255"/>
        <end position="259"/>
    </location>
</feature>
<feature type="strand" evidence="10">
    <location>
        <begin position="266"/>
        <end position="269"/>
    </location>
</feature>
<feature type="turn" evidence="10">
    <location>
        <begin position="276"/>
        <end position="278"/>
    </location>
</feature>
<feature type="helix" evidence="10">
    <location>
        <begin position="281"/>
        <end position="284"/>
    </location>
</feature>
<feature type="helix" evidence="10">
    <location>
        <begin position="291"/>
        <end position="311"/>
    </location>
</feature>
<evidence type="ECO:0000255" key="1">
    <source>
        <dbReference type="HAMAP-Rule" id="MF_01109"/>
    </source>
</evidence>
<evidence type="ECO:0000269" key="2">
    <source>
    </source>
</evidence>
<evidence type="ECO:0000269" key="3">
    <source>
    </source>
</evidence>
<evidence type="ECO:0000269" key="4">
    <source>
    </source>
</evidence>
<evidence type="ECO:0000269" key="5">
    <source>
    </source>
</evidence>
<evidence type="ECO:0000303" key="6">
    <source>
    </source>
</evidence>
<evidence type="ECO:0000305" key="7"/>
<evidence type="ECO:0000305" key="8">
    <source>
    </source>
</evidence>
<evidence type="ECO:0000305" key="9">
    <source>
    </source>
</evidence>
<evidence type="ECO:0007829" key="10">
    <source>
        <dbReference type="PDB" id="1PVV"/>
    </source>
</evidence>
<dbReference type="EC" id="2.1.3.3" evidence="1"/>
<dbReference type="EMBL" id="X99225">
    <property type="protein sequence ID" value="CAA67609.1"/>
    <property type="molecule type" value="Genomic_DNA"/>
</dbReference>
<dbReference type="EMBL" id="Y12727">
    <property type="protein sequence ID" value="CAA73260.1"/>
    <property type="molecule type" value="Genomic_DNA"/>
</dbReference>
<dbReference type="EMBL" id="AE009950">
    <property type="protein sequence ID" value="AAL80718.1"/>
    <property type="molecule type" value="Genomic_DNA"/>
</dbReference>
<dbReference type="PIR" id="T45077">
    <property type="entry name" value="T45077"/>
</dbReference>
<dbReference type="RefSeq" id="WP_011011713.1">
    <property type="nucleotide sequence ID" value="NZ_CP023154.1"/>
</dbReference>
<dbReference type="PDB" id="1A1S">
    <property type="method" value="X-ray"/>
    <property type="resolution" value="2.70 A"/>
    <property type="chains" value="A=2-315"/>
</dbReference>
<dbReference type="PDB" id="1PVV">
    <property type="method" value="X-ray"/>
    <property type="resolution" value="1.87 A"/>
    <property type="chains" value="A=1-315"/>
</dbReference>
<dbReference type="PDBsum" id="1A1S"/>
<dbReference type="PDBsum" id="1PVV"/>
<dbReference type="SMR" id="Q51742"/>
<dbReference type="DIP" id="DIP-48301N"/>
<dbReference type="IntAct" id="Q51742">
    <property type="interactions" value="1"/>
</dbReference>
<dbReference type="STRING" id="186497.PF0594"/>
<dbReference type="PaxDb" id="186497-PF0594"/>
<dbReference type="GeneID" id="41712399"/>
<dbReference type="KEGG" id="pfu:PF0594"/>
<dbReference type="PATRIC" id="fig|186497.12.peg.623"/>
<dbReference type="eggNOG" id="arCOG00912">
    <property type="taxonomic scope" value="Archaea"/>
</dbReference>
<dbReference type="HOGENOM" id="CLU_043846_3_2_2"/>
<dbReference type="OrthoDB" id="4696at2157"/>
<dbReference type="PhylomeDB" id="Q51742"/>
<dbReference type="BRENDA" id="2.1.3.3">
    <property type="organism ID" value="5243"/>
</dbReference>
<dbReference type="UniPathway" id="UPA00068">
    <property type="reaction ID" value="UER00112"/>
</dbReference>
<dbReference type="EvolutionaryTrace" id="Q51742"/>
<dbReference type="Proteomes" id="UP000001013">
    <property type="component" value="Chromosome"/>
</dbReference>
<dbReference type="GO" id="GO:0005737">
    <property type="term" value="C:cytoplasm"/>
    <property type="evidence" value="ECO:0007669"/>
    <property type="project" value="UniProtKB-SubCell"/>
</dbReference>
<dbReference type="GO" id="GO:0016597">
    <property type="term" value="F:amino acid binding"/>
    <property type="evidence" value="ECO:0007669"/>
    <property type="project" value="InterPro"/>
</dbReference>
<dbReference type="GO" id="GO:0004585">
    <property type="term" value="F:ornithine carbamoyltransferase activity"/>
    <property type="evidence" value="ECO:0007669"/>
    <property type="project" value="UniProtKB-UniRule"/>
</dbReference>
<dbReference type="GO" id="GO:0042450">
    <property type="term" value="P:arginine biosynthetic process via ornithine"/>
    <property type="evidence" value="ECO:0007669"/>
    <property type="project" value="TreeGrafter"/>
</dbReference>
<dbReference type="GO" id="GO:0019240">
    <property type="term" value="P:citrulline biosynthetic process"/>
    <property type="evidence" value="ECO:0007669"/>
    <property type="project" value="TreeGrafter"/>
</dbReference>
<dbReference type="GO" id="GO:0006526">
    <property type="term" value="P:L-arginine biosynthetic process"/>
    <property type="evidence" value="ECO:0007669"/>
    <property type="project" value="UniProtKB-UniRule"/>
</dbReference>
<dbReference type="FunFam" id="3.40.50.1370:FF:000008">
    <property type="entry name" value="Ornithine carbamoyltransferase"/>
    <property type="match status" value="1"/>
</dbReference>
<dbReference type="FunFam" id="3.40.50.1370:FF:000016">
    <property type="entry name" value="Ornithine carbamoyltransferase"/>
    <property type="match status" value="1"/>
</dbReference>
<dbReference type="Gene3D" id="3.40.50.1370">
    <property type="entry name" value="Aspartate/ornithine carbamoyltransferase"/>
    <property type="match status" value="2"/>
</dbReference>
<dbReference type="HAMAP" id="MF_01109">
    <property type="entry name" value="OTCase"/>
    <property type="match status" value="1"/>
</dbReference>
<dbReference type="InterPro" id="IPR006132">
    <property type="entry name" value="Asp/Orn_carbamoyltranf_P-bd"/>
</dbReference>
<dbReference type="InterPro" id="IPR006130">
    <property type="entry name" value="Asp/Orn_carbamoylTrfase"/>
</dbReference>
<dbReference type="InterPro" id="IPR036901">
    <property type="entry name" value="Asp/Orn_carbamoylTrfase_sf"/>
</dbReference>
<dbReference type="InterPro" id="IPR006131">
    <property type="entry name" value="Asp_carbamoyltransf_Asp/Orn-bd"/>
</dbReference>
<dbReference type="InterPro" id="IPR002292">
    <property type="entry name" value="Orn/put_carbamltrans"/>
</dbReference>
<dbReference type="InterPro" id="IPR024904">
    <property type="entry name" value="OTCase_ArgI"/>
</dbReference>
<dbReference type="NCBIfam" id="TIGR00658">
    <property type="entry name" value="orni_carb_tr"/>
    <property type="match status" value="1"/>
</dbReference>
<dbReference type="NCBIfam" id="NF001986">
    <property type="entry name" value="PRK00779.1"/>
    <property type="match status" value="1"/>
</dbReference>
<dbReference type="PANTHER" id="PTHR45753">
    <property type="entry name" value="ORNITHINE CARBAMOYLTRANSFERASE, MITOCHONDRIAL"/>
    <property type="match status" value="1"/>
</dbReference>
<dbReference type="PANTHER" id="PTHR45753:SF3">
    <property type="entry name" value="ORNITHINE TRANSCARBAMYLASE, MITOCHONDRIAL"/>
    <property type="match status" value="1"/>
</dbReference>
<dbReference type="Pfam" id="PF00185">
    <property type="entry name" value="OTCace"/>
    <property type="match status" value="1"/>
</dbReference>
<dbReference type="Pfam" id="PF02729">
    <property type="entry name" value="OTCace_N"/>
    <property type="match status" value="1"/>
</dbReference>
<dbReference type="PRINTS" id="PR00100">
    <property type="entry name" value="AOTCASE"/>
</dbReference>
<dbReference type="PRINTS" id="PR00102">
    <property type="entry name" value="OTCASE"/>
</dbReference>
<dbReference type="SUPFAM" id="SSF53671">
    <property type="entry name" value="Aspartate/ornithine carbamoyltransferase"/>
    <property type="match status" value="1"/>
</dbReference>
<dbReference type="PROSITE" id="PS00097">
    <property type="entry name" value="CARBAMOYLTRANSFERASE"/>
    <property type="match status" value="1"/>
</dbReference>
<sequence length="315" mass="35181">MVVSLAGRDLLCLQDYTAEEIWTILETAKMFKIWQKIGKPHRLLEGKTLAMIFQKPSTRTRVSFEVAMAHLGGHALYLNAQDLQLRRGETIADTARVLSRYVDAIMARVYDHKDVEDLAKYATVPVINGLSDFSHPCQALADYMTIWEKKGTIKGVKVVYVGDGNNVAHSLMIAGTKLGADVVVATPEGYEPDEKVIKWAEQNAAESGGSFELLHDPVKAVKDADVIYTDVWASMGQEAEAEERRKIFRPFQVNKDLVKHAKPDYMFMHCLPAHRGEEVTDDVIDSPNSVVWDQAENRLHAQKAVLALVMGGIKF</sequence>
<gene>
    <name evidence="6" type="primary">argF</name>
    <name type="ordered locus">PF0594</name>
</gene>
<keyword id="KW-0002">3D-structure</keyword>
<keyword id="KW-0028">Amino-acid biosynthesis</keyword>
<keyword id="KW-0055">Arginine biosynthesis</keyword>
<keyword id="KW-0963">Cytoplasm</keyword>
<keyword id="KW-0903">Direct protein sequencing</keyword>
<keyword id="KW-1185">Reference proteome</keyword>
<keyword id="KW-0808">Transferase</keyword>
<reference key="1">
    <citation type="journal article" date="1997" name="Eur. J. Biochem.">
        <title>Isolation of the gene encoding Pyrococcus furiosus ornithine carbamoyltransferase and study of its expression profile in vivo and in vitro.</title>
        <authorList>
            <person name="Roovers M."/>
            <person name="Hetcke C."/>
            <person name="Legrain C."/>
            <person name="Thomm M."/>
            <person name="Glansdorff N."/>
        </authorList>
    </citation>
    <scope>NUCLEOTIDE SEQUENCE [GENOMIC DNA]</scope>
    <source>
        <strain>ATCC 43587 / DSM 3638 / JCM 8422 / Vc1</strain>
    </source>
</reference>
<reference key="2">
    <citation type="journal article" date="1999" name="Genetics">
        <title>Divergence of the hyperthermophilic archaea Pyrococcus furiosus and P. horikoshii inferred from complete genomic sequences.</title>
        <authorList>
            <person name="Maeder D.L."/>
            <person name="Weiss R.B."/>
            <person name="Dunn D.M."/>
            <person name="Cherry J.L."/>
            <person name="Gonzalez J.M."/>
            <person name="DiRuggiero J."/>
            <person name="Robb F.T."/>
        </authorList>
    </citation>
    <scope>NUCLEOTIDE SEQUENCE [LARGE SCALE GENOMIC DNA]</scope>
    <source>
        <strain>ATCC 43587 / DSM 3638 / JCM 8422 / Vc1</strain>
    </source>
</reference>
<reference key="3">
    <citation type="journal article" date="1997" name="Eur. J. Biochem.">
        <title>Biochemical characterisation of ornithine carbamoyltransferase from Pyrococcus furiosus.</title>
        <authorList>
            <person name="Legrain C."/>
            <person name="Villeret V."/>
            <person name="Roovers M."/>
            <person name="Gigot D."/>
            <person name="Dideberg O."/>
            <person name="Pierard A."/>
            <person name="Glansdorff N."/>
        </authorList>
    </citation>
    <scope>PROTEIN SEQUENCE OF 2-12</scope>
    <scope>FUNCTION AS AN OTCASE</scope>
    <scope>ACTIVITY REGULATION</scope>
    <scope>BIOPHYSICOCHEMICAL PROPERTIES</scope>
    <source>
        <strain>ATCC 43587 / DSM 3638 / JCM 8422 / Vc1</strain>
    </source>
</reference>
<reference key="4">
    <citation type="journal article" date="2002" name="J. Biol. Chem.">
        <title>Metabolic channeling of carbamoyl phosphate, a thermolabile intermediate: evidence for physical interaction between carbamate kinase-like carbamoyl-phosphate synthetase and ornithine carbamoyltransferase from the hyperthermophile Pyrococcus furiosus.</title>
        <authorList>
            <person name="Massant J."/>
            <person name="Verstreken P."/>
            <person name="Durbecq V."/>
            <person name="Kholti A."/>
            <person name="Legrain C."/>
            <person name="Beeckmans S."/>
            <person name="Cornelis P."/>
            <person name="Glansdorff N."/>
        </authorList>
    </citation>
    <scope>INTERACTION WITH CARBAMOYL-PHOSPHATE SYNTHETASE</scope>
</reference>
<reference key="5">
    <citation type="journal article" date="2001" name="J. Bacteriol.">
        <title>Experimental evolution of enzyme temperature activity profile: selection in vivo and characterization of low-temperature-adapted mutants of Pyrococcus furiosus ornithine carbamoyltransferase.</title>
        <authorList>
            <person name="Roovers M."/>
            <person name="Sanchez R."/>
            <person name="Legrain C."/>
            <person name="Glansdorff N."/>
        </authorList>
    </citation>
    <scope>MUTAGENESIS OF TYR-228; ALA-241 AND GLU-278</scope>
</reference>
<reference key="6">
    <citation type="journal article" date="2001" name="Eur. J. Biochem.">
        <title>Probing the role of oligomerization in the high thermal stability of Pyrococcus furiosus ornithine carbamoyltransferase by site-specific mutants.</title>
        <authorList>
            <person name="Clantin B."/>
            <person name="Tricot C."/>
            <person name="Lonhienne T."/>
            <person name="Stalon V."/>
            <person name="Villeret V."/>
        </authorList>
    </citation>
    <scope>MUTAGENESIS OF TRP-22; GLU-26; MET-30 AND TRP-34</scope>
</reference>
<reference key="7">
    <citation type="journal article" date="1998" name="Proc. Natl. Acad. Sci. U.S.A.">
        <title>The crystal structure of Pyrococcus furiosus ornithine carbamoyltransferase reveals a key role for oligomerization in enzyme stability at extremely high temperatures.</title>
        <authorList>
            <person name="Villeret V."/>
            <person name="Clantin B."/>
            <person name="Tricot C."/>
            <person name="Legrain C."/>
            <person name="Roovers M."/>
            <person name="Stalon V."/>
            <person name="Glansdorff N."/>
            <person name="van Beeumen J."/>
        </authorList>
    </citation>
    <scope>X-RAY CRYSTALLOGRAPHY (2.7 ANGSTROMS)</scope>
    <scope>BIOPHYSICOCHEMICAL PROPERTIES</scope>
    <scope>DOMAIN</scope>
    <scope>SUBUNIT</scope>
</reference>
<reference key="8">
    <citation type="journal article" date="2003" name="Acta Crystallogr. D">
        <title>Refined structure of Pyrococcus furiosus ornithine carbamoyltransferase at 1.87 A.</title>
        <authorList>
            <person name="Massant J."/>
            <person name="Wouters J."/>
            <person name="Glansdorff N."/>
        </authorList>
    </citation>
    <scope>X-RAY CRYSTALLOGRAPHY (1.87 ANGSTROMS)IN COMPLEX WITH SUBSTRATE ANALOG</scope>
    <scope>THERMOSTABILITY</scope>
    <scope>SUBUNIT</scope>
</reference>
<organism>
    <name type="scientific">Pyrococcus furiosus (strain ATCC 43587 / DSM 3638 / JCM 8422 / Vc1)</name>
    <dbReference type="NCBI Taxonomy" id="186497"/>
    <lineage>
        <taxon>Archaea</taxon>
        <taxon>Methanobacteriati</taxon>
        <taxon>Methanobacteriota</taxon>
        <taxon>Thermococci</taxon>
        <taxon>Thermococcales</taxon>
        <taxon>Thermococcaceae</taxon>
        <taxon>Pyrococcus</taxon>
    </lineage>
</organism>
<comment type="function">
    <text evidence="4">Reversibly catalyzes the transfer of the carbamoyl group from carbamoyl phosphate (CP) to the N(epsilon) atom of ornithine (ORN) to produce L-citrulline, which is a substrate for argininosuccinate synthetase, the enzyme involved in the final step in arginine biosynthesis.</text>
</comment>
<comment type="catalytic activity">
    <reaction evidence="1">
        <text>carbamoyl phosphate + L-ornithine = L-citrulline + phosphate + H(+)</text>
        <dbReference type="Rhea" id="RHEA:19513"/>
        <dbReference type="ChEBI" id="CHEBI:15378"/>
        <dbReference type="ChEBI" id="CHEBI:43474"/>
        <dbReference type="ChEBI" id="CHEBI:46911"/>
        <dbReference type="ChEBI" id="CHEBI:57743"/>
        <dbReference type="ChEBI" id="CHEBI:58228"/>
        <dbReference type="EC" id="2.1.3.3"/>
    </reaction>
</comment>
<comment type="activity regulation">
    <text evidence="4">Inhibited by the bisubstrate delta-N-phosphonoacetyl-L-ornithine (PALO).</text>
</comment>
<comment type="biophysicochemical properties">
    <kinetics>
        <KM evidence="4">0.13 mM for L-ornithine</KM>
        <KM evidence="4">0.13 mM for carbamoyl phosphate</KM>
    </kinetics>
    <phDependence>
        <text evidence="4 5">Optimum pH is 6.5 (at 55 degrees Celsius).</text>
    </phDependence>
    <temperatureDependence>
        <text evidence="5">Extreme thermal stability. It maintains about 50% of its activity after heat treatment for 60 minutes at 100 degrees Celsius.</text>
    </temperatureDependence>
</comment>
<comment type="pathway">
    <text evidence="1">Amino-acid biosynthesis; L-arginine biosynthesis; L-arginine from L-ornithine and carbamoyl phosphate: step 1/3.</text>
</comment>
<comment type="subunit">
    <text evidence="5 8">Homododecamer (tetramer of trimers).</text>
</comment>
<comment type="subcellular location">
    <subcellularLocation>
        <location evidence="7">Cytoplasm</location>
    </subcellularLocation>
</comment>
<comment type="domain">
    <text evidence="5">The monomer folds into two domains of similar size. The N-terminal domain is the carbamoylphosphate-binding domain; ornithine binds to the C-terminal domain.</text>
</comment>
<comment type="miscellaneous">
    <text evidence="9">It interacts physically with carbamoyl-phosphate synthetase (CKase), forming a channeling cluster for carbamoyl phosphate. This prevents the thermodenaturation of carbamoyl phosphate, an extremely thermolabile and potentially toxic metabolic intermediate (PubMed:9501170).</text>
</comment>
<comment type="similarity">
    <text evidence="7">Belongs to the aspartate/ornithine carbamoyltransferase superfamily. OTCase family.</text>
</comment>
<name>OTCA_PYRFU</name>
<accession>Q51742</accession>